<geneLocation type="chloroplast"/>
<proteinExistence type="inferred from homology"/>
<protein>
    <recommendedName>
        <fullName evidence="1">Photosystem II CP43 reaction center protein</fullName>
    </recommendedName>
    <alternativeName>
        <fullName evidence="1">PSII 43 kDa protein</fullName>
    </alternativeName>
    <alternativeName>
        <fullName evidence="1">Protein CP-43</fullName>
    </alternativeName>
</protein>
<reference key="1">
    <citation type="journal article" date="2005" name="Mol. Biol. Evol.">
        <title>Identifying the basal angiosperm node in chloroplast genome phylogenies: sampling one's way out of the Felsenstein zone.</title>
        <authorList>
            <person name="Leebens-Mack J."/>
            <person name="Raubeson L.A."/>
            <person name="Cui L."/>
            <person name="Kuehl J.V."/>
            <person name="Fourcade M.H."/>
            <person name="Chumley T.W."/>
            <person name="Boore J.L."/>
            <person name="Jansen R.K."/>
            <person name="dePamphilis C.W."/>
        </authorList>
    </citation>
    <scope>NUCLEOTIDE SEQUENCE [GENOMIC DNA]</scope>
</reference>
<reference key="2">
    <citation type="journal article" date="2007" name="BMC Genomics">
        <title>Comparative chloroplast genomics: analyses including new sequences from the angiosperms Nuphar advena and Ranunculus macranthus.</title>
        <authorList>
            <person name="Raubeson L.A."/>
            <person name="Peery R."/>
            <person name="Chumley T.W."/>
            <person name="Dziubek C."/>
            <person name="Fourcade H.M."/>
            <person name="Boore J.L."/>
            <person name="Jansen R.K."/>
        </authorList>
    </citation>
    <scope>NUCLEOTIDE SEQUENCE [LARGE SCALE GENOMIC DNA]</scope>
</reference>
<dbReference type="EMBL" id="DQ069646">
    <property type="protein sequence ID" value="AAZ04078.1"/>
    <property type="molecule type" value="Genomic_DNA"/>
</dbReference>
<dbReference type="EMBL" id="DQ359689">
    <property type="protein sequence ID" value="ABC70752.1"/>
    <property type="molecule type" value="Genomic_DNA"/>
</dbReference>
<dbReference type="RefSeq" id="YP_001004182.2">
    <property type="nucleotide sequence ID" value="NC_008796.1"/>
</dbReference>
<dbReference type="SMR" id="Q4FFN5"/>
<dbReference type="GeneID" id="4712201"/>
<dbReference type="GO" id="GO:0009535">
    <property type="term" value="C:chloroplast thylakoid membrane"/>
    <property type="evidence" value="ECO:0007669"/>
    <property type="project" value="UniProtKB-SubCell"/>
</dbReference>
<dbReference type="GO" id="GO:0009523">
    <property type="term" value="C:photosystem II"/>
    <property type="evidence" value="ECO:0007669"/>
    <property type="project" value="UniProtKB-KW"/>
</dbReference>
<dbReference type="GO" id="GO:0016168">
    <property type="term" value="F:chlorophyll binding"/>
    <property type="evidence" value="ECO:0007669"/>
    <property type="project" value="UniProtKB-UniRule"/>
</dbReference>
<dbReference type="GO" id="GO:0045156">
    <property type="term" value="F:electron transporter, transferring electrons within the cyclic electron transport pathway of photosynthesis activity"/>
    <property type="evidence" value="ECO:0007669"/>
    <property type="project" value="InterPro"/>
</dbReference>
<dbReference type="GO" id="GO:0046872">
    <property type="term" value="F:metal ion binding"/>
    <property type="evidence" value="ECO:0007669"/>
    <property type="project" value="UniProtKB-KW"/>
</dbReference>
<dbReference type="GO" id="GO:0009772">
    <property type="term" value="P:photosynthetic electron transport in photosystem II"/>
    <property type="evidence" value="ECO:0007669"/>
    <property type="project" value="InterPro"/>
</dbReference>
<dbReference type="FunFam" id="1.10.10.670:FF:000001">
    <property type="entry name" value="Photosystem II CP43 reaction center protein"/>
    <property type="match status" value="1"/>
</dbReference>
<dbReference type="Gene3D" id="1.10.10.670">
    <property type="entry name" value="photosystem ii from thermosynechococcus elongatus"/>
    <property type="match status" value="1"/>
</dbReference>
<dbReference type="HAMAP" id="MF_01496">
    <property type="entry name" value="PSII_PsbC_CP43"/>
    <property type="match status" value="1"/>
</dbReference>
<dbReference type="InterPro" id="IPR000932">
    <property type="entry name" value="PS_antenna-like"/>
</dbReference>
<dbReference type="InterPro" id="IPR036001">
    <property type="entry name" value="PS_II_antenna-like_sf"/>
</dbReference>
<dbReference type="InterPro" id="IPR005869">
    <property type="entry name" value="PSII_PsbC"/>
</dbReference>
<dbReference type="InterPro" id="IPR044900">
    <property type="entry name" value="PSII_PsbC_sf"/>
</dbReference>
<dbReference type="NCBIfam" id="TIGR01153">
    <property type="entry name" value="psbC"/>
    <property type="match status" value="1"/>
</dbReference>
<dbReference type="Pfam" id="PF00421">
    <property type="entry name" value="PSII"/>
    <property type="match status" value="1"/>
</dbReference>
<dbReference type="SUPFAM" id="SSF161077">
    <property type="entry name" value="Photosystem II antenna protein-like"/>
    <property type="match status" value="1"/>
</dbReference>
<gene>
    <name evidence="1" type="primary">psbC</name>
</gene>
<sequence>MKTLYSPRRFYPVETLFNGTLALAGRDQETTGFAWWAGNARLINLSGKLLGAHVAHAGLIVFWAGAMNLFEVAHFVPEKPMYEQGLILLPHLATLGWGIGPGGEVIDTFPYFVSGVLHLISSAVLGFGGIYHSLLGPETLEESFPFFGYVWKDRNKMTTILGIHLILLGIGAFLLVLKALYFGGVYDTWAPGGGDVRKISNLTLSPSIIFGYLLKSPFGGEGWIVSVDDLEDIIGGHVWLGSICIFGGIWHILTKPFAWARRALVWSGEAYLSYSLAALSVFGFTACCFVWFNNTAYPSEFYGPTGPEASQAQAFTFLVRDQRLGANVGSAQGPTGLGKYLMRSPTGEVIFGGETMRFWDLRAPWLEPLRGPNGLDLSRLKKDIQPWQERRSAEYMTHAPLGSLNSVGGVATEINAVNYVSPRSWLSTSHFVLGFFLFVGHLWHAGRARAAAAGFEKGIDRDLEPVLFMTPLN</sequence>
<keyword id="KW-0007">Acetylation</keyword>
<keyword id="KW-0148">Chlorophyll</keyword>
<keyword id="KW-0150">Chloroplast</keyword>
<keyword id="KW-0157">Chromophore</keyword>
<keyword id="KW-0464">Manganese</keyword>
<keyword id="KW-0472">Membrane</keyword>
<keyword id="KW-0479">Metal-binding</keyword>
<keyword id="KW-0597">Phosphoprotein</keyword>
<keyword id="KW-0602">Photosynthesis</keyword>
<keyword id="KW-0604">Photosystem II</keyword>
<keyword id="KW-0934">Plastid</keyword>
<keyword id="KW-0793">Thylakoid</keyword>
<keyword id="KW-0812">Transmembrane</keyword>
<keyword id="KW-1133">Transmembrane helix</keyword>
<accession>Q4FFN5</accession>
<feature type="propeptide" id="PRO_0000431203" evidence="1">
    <location>
        <begin position="1"/>
        <end position="14"/>
    </location>
</feature>
<feature type="chain" id="PRO_0000361487" description="Photosystem II CP43 reaction center protein" evidence="1">
    <location>
        <begin position="15"/>
        <end position="473"/>
    </location>
</feature>
<feature type="transmembrane region" description="Helical" evidence="1">
    <location>
        <begin position="69"/>
        <end position="93"/>
    </location>
</feature>
<feature type="transmembrane region" description="Helical" evidence="1">
    <location>
        <begin position="134"/>
        <end position="155"/>
    </location>
</feature>
<feature type="transmembrane region" description="Helical" evidence="1">
    <location>
        <begin position="178"/>
        <end position="200"/>
    </location>
</feature>
<feature type="transmembrane region" description="Helical" evidence="1">
    <location>
        <begin position="255"/>
        <end position="275"/>
    </location>
</feature>
<feature type="transmembrane region" description="Helical" evidence="1">
    <location>
        <begin position="291"/>
        <end position="312"/>
    </location>
</feature>
<feature type="transmembrane region" description="Helical" evidence="1">
    <location>
        <begin position="447"/>
        <end position="471"/>
    </location>
</feature>
<feature type="binding site" evidence="1">
    <location>
        <position position="367"/>
    </location>
    <ligand>
        <name>[CaMn4O5] cluster</name>
        <dbReference type="ChEBI" id="CHEBI:189552"/>
    </ligand>
</feature>
<feature type="modified residue" description="N-acetylthreonine" evidence="1">
    <location>
        <position position="15"/>
    </location>
</feature>
<feature type="modified residue" description="Phosphothreonine" evidence="1">
    <location>
        <position position="15"/>
    </location>
</feature>
<organism>
    <name type="scientific">Ranunculus macranthus</name>
    <name type="common">Large buttercup</name>
    <dbReference type="NCBI Taxonomy" id="334596"/>
    <lineage>
        <taxon>Eukaryota</taxon>
        <taxon>Viridiplantae</taxon>
        <taxon>Streptophyta</taxon>
        <taxon>Embryophyta</taxon>
        <taxon>Tracheophyta</taxon>
        <taxon>Spermatophyta</taxon>
        <taxon>Magnoliopsida</taxon>
        <taxon>Ranunculales</taxon>
        <taxon>Ranunculaceae</taxon>
        <taxon>Ranunculoideae</taxon>
        <taxon>Ranunculeae</taxon>
        <taxon>Ranunculus</taxon>
    </lineage>
</organism>
<name>PSBC_RANMC</name>
<evidence type="ECO:0000255" key="1">
    <source>
        <dbReference type="HAMAP-Rule" id="MF_01496"/>
    </source>
</evidence>
<comment type="function">
    <text evidence="1">One of the components of the core complex of photosystem II (PSII). It binds chlorophyll and helps catalyze the primary light-induced photochemical processes of PSII. PSII is a light-driven water:plastoquinone oxidoreductase, using light energy to abstract electrons from H(2)O, generating O(2) and a proton gradient subsequently used for ATP formation.</text>
</comment>
<comment type="cofactor">
    <text evidence="1">Binds multiple chlorophylls and provides some of the ligands for the Ca-4Mn-5O cluster of the oxygen-evolving complex. It may also provide a ligand for a Cl- that is required for oxygen evolution. PSII binds additional chlorophylls, carotenoids and specific lipids.</text>
</comment>
<comment type="subunit">
    <text evidence="1">PSII is composed of 1 copy each of membrane proteins PsbA, PsbB, PsbC, PsbD, PsbE, PsbF, PsbH, PsbI, PsbJ, PsbK, PsbL, PsbM, PsbT, PsbX, PsbY, PsbZ, Psb30/Ycf12, at least 3 peripheral proteins of the oxygen-evolving complex and a large number of cofactors. It forms dimeric complexes.</text>
</comment>
<comment type="subcellular location">
    <subcellularLocation>
        <location evidence="1">Plastid</location>
        <location evidence="1">Chloroplast thylakoid membrane</location>
        <topology evidence="1">Multi-pass membrane protein</topology>
    </subcellularLocation>
</comment>
<comment type="similarity">
    <text evidence="1">Belongs to the PsbB/PsbC family. PsbC subfamily.</text>
</comment>